<evidence type="ECO:0000250" key="1">
    <source>
        <dbReference type="UniProtKB" id="F2Z5G5"/>
    </source>
</evidence>
<evidence type="ECO:0000250" key="2">
    <source>
        <dbReference type="UniProtKB" id="P61163"/>
    </source>
</evidence>
<evidence type="ECO:0000250" key="3">
    <source>
        <dbReference type="UniProtKB" id="P85515"/>
    </source>
</evidence>
<evidence type="ECO:0000305" key="4"/>
<gene>
    <name type="primary">Actr1a</name>
    <name type="synonym">Ctrn1</name>
</gene>
<name>ACTZ_MOUSE</name>
<sequence>MESYDVIANQPVVIDNGSGVIKAGFAGDQIPKYCFPNYVGRPKHVRVMAGALEGDIFIGPKAEEHRGLLSIRYPMEHGIVKDWNDMERIWQYVYSKDQLQTFSEEHPVLLTEAPLNPRKNRERAAEVFFETFNVPALFISMQAVLSLYATGRTTGVVLDSGDGVTHAVPIYEGFAMPHSIMRIDIAGRDVSRFLRLYLRKEGYDFHSSSEFEIVKAIKERACYLSINPQKDETLETEKAQYYLPDGSTIEIGPSRFRAPELLFRPDLIGEESEGIHEVLVFAIQKSDMDLRRTLFSNIVLSGGSTLFKGFGDRLLSEVKKLAPKDVKIRISAPQERLYSTWIGGSILASLDTFKKMWVSKKEYEEDGARSIHRKTF</sequence>
<reference key="1">
    <citation type="journal article" date="1997" name="Zool. Sci.">
        <title>Primary structure of mouse actin-related protein 1 (Arp1) and its tissue expression.</title>
        <authorList>
            <person name="Kusano K."/>
            <person name="Abe H."/>
            <person name="Obinata T."/>
        </authorList>
    </citation>
    <scope>NUCLEOTIDE SEQUENCE [MRNA]</scope>
    <source>
        <tissue>Diaphragm</tissue>
    </source>
</reference>
<reference key="2">
    <citation type="journal article" date="2005" name="Science">
        <title>The transcriptional landscape of the mammalian genome.</title>
        <authorList>
            <person name="Carninci P."/>
            <person name="Kasukawa T."/>
            <person name="Katayama S."/>
            <person name="Gough J."/>
            <person name="Frith M.C."/>
            <person name="Maeda N."/>
            <person name="Oyama R."/>
            <person name="Ravasi T."/>
            <person name="Lenhard B."/>
            <person name="Wells C."/>
            <person name="Kodzius R."/>
            <person name="Shimokawa K."/>
            <person name="Bajic V.B."/>
            <person name="Brenner S.E."/>
            <person name="Batalov S."/>
            <person name="Forrest A.R."/>
            <person name="Zavolan M."/>
            <person name="Davis M.J."/>
            <person name="Wilming L.G."/>
            <person name="Aidinis V."/>
            <person name="Allen J.E."/>
            <person name="Ambesi-Impiombato A."/>
            <person name="Apweiler R."/>
            <person name="Aturaliya R.N."/>
            <person name="Bailey T.L."/>
            <person name="Bansal M."/>
            <person name="Baxter L."/>
            <person name="Beisel K.W."/>
            <person name="Bersano T."/>
            <person name="Bono H."/>
            <person name="Chalk A.M."/>
            <person name="Chiu K.P."/>
            <person name="Choudhary V."/>
            <person name="Christoffels A."/>
            <person name="Clutterbuck D.R."/>
            <person name="Crowe M.L."/>
            <person name="Dalla E."/>
            <person name="Dalrymple B.P."/>
            <person name="de Bono B."/>
            <person name="Della Gatta G."/>
            <person name="di Bernardo D."/>
            <person name="Down T."/>
            <person name="Engstrom P."/>
            <person name="Fagiolini M."/>
            <person name="Faulkner G."/>
            <person name="Fletcher C.F."/>
            <person name="Fukushima T."/>
            <person name="Furuno M."/>
            <person name="Futaki S."/>
            <person name="Gariboldi M."/>
            <person name="Georgii-Hemming P."/>
            <person name="Gingeras T.R."/>
            <person name="Gojobori T."/>
            <person name="Green R.E."/>
            <person name="Gustincich S."/>
            <person name="Harbers M."/>
            <person name="Hayashi Y."/>
            <person name="Hensch T.K."/>
            <person name="Hirokawa N."/>
            <person name="Hill D."/>
            <person name="Huminiecki L."/>
            <person name="Iacono M."/>
            <person name="Ikeo K."/>
            <person name="Iwama A."/>
            <person name="Ishikawa T."/>
            <person name="Jakt M."/>
            <person name="Kanapin A."/>
            <person name="Katoh M."/>
            <person name="Kawasawa Y."/>
            <person name="Kelso J."/>
            <person name="Kitamura H."/>
            <person name="Kitano H."/>
            <person name="Kollias G."/>
            <person name="Krishnan S.P."/>
            <person name="Kruger A."/>
            <person name="Kummerfeld S.K."/>
            <person name="Kurochkin I.V."/>
            <person name="Lareau L.F."/>
            <person name="Lazarevic D."/>
            <person name="Lipovich L."/>
            <person name="Liu J."/>
            <person name="Liuni S."/>
            <person name="McWilliam S."/>
            <person name="Madan Babu M."/>
            <person name="Madera M."/>
            <person name="Marchionni L."/>
            <person name="Matsuda H."/>
            <person name="Matsuzawa S."/>
            <person name="Miki H."/>
            <person name="Mignone F."/>
            <person name="Miyake S."/>
            <person name="Morris K."/>
            <person name="Mottagui-Tabar S."/>
            <person name="Mulder N."/>
            <person name="Nakano N."/>
            <person name="Nakauchi H."/>
            <person name="Ng P."/>
            <person name="Nilsson R."/>
            <person name="Nishiguchi S."/>
            <person name="Nishikawa S."/>
            <person name="Nori F."/>
            <person name="Ohara O."/>
            <person name="Okazaki Y."/>
            <person name="Orlando V."/>
            <person name="Pang K.C."/>
            <person name="Pavan W.J."/>
            <person name="Pavesi G."/>
            <person name="Pesole G."/>
            <person name="Petrovsky N."/>
            <person name="Piazza S."/>
            <person name="Reed J."/>
            <person name="Reid J.F."/>
            <person name="Ring B.Z."/>
            <person name="Ringwald M."/>
            <person name="Rost B."/>
            <person name="Ruan Y."/>
            <person name="Salzberg S.L."/>
            <person name="Sandelin A."/>
            <person name="Schneider C."/>
            <person name="Schoenbach C."/>
            <person name="Sekiguchi K."/>
            <person name="Semple C.A."/>
            <person name="Seno S."/>
            <person name="Sessa L."/>
            <person name="Sheng Y."/>
            <person name="Shibata Y."/>
            <person name="Shimada H."/>
            <person name="Shimada K."/>
            <person name="Silva D."/>
            <person name="Sinclair B."/>
            <person name="Sperling S."/>
            <person name="Stupka E."/>
            <person name="Sugiura K."/>
            <person name="Sultana R."/>
            <person name="Takenaka Y."/>
            <person name="Taki K."/>
            <person name="Tammoja K."/>
            <person name="Tan S.L."/>
            <person name="Tang S."/>
            <person name="Taylor M.S."/>
            <person name="Tegner J."/>
            <person name="Teichmann S.A."/>
            <person name="Ueda H.R."/>
            <person name="van Nimwegen E."/>
            <person name="Verardo R."/>
            <person name="Wei C.L."/>
            <person name="Yagi K."/>
            <person name="Yamanishi H."/>
            <person name="Zabarovsky E."/>
            <person name="Zhu S."/>
            <person name="Zimmer A."/>
            <person name="Hide W."/>
            <person name="Bult C."/>
            <person name="Grimmond S.M."/>
            <person name="Teasdale R.D."/>
            <person name="Liu E.T."/>
            <person name="Brusic V."/>
            <person name="Quackenbush J."/>
            <person name="Wahlestedt C."/>
            <person name="Mattick J.S."/>
            <person name="Hume D.A."/>
            <person name="Kai C."/>
            <person name="Sasaki D."/>
            <person name="Tomaru Y."/>
            <person name="Fukuda S."/>
            <person name="Kanamori-Katayama M."/>
            <person name="Suzuki M."/>
            <person name="Aoki J."/>
            <person name="Arakawa T."/>
            <person name="Iida J."/>
            <person name="Imamura K."/>
            <person name="Itoh M."/>
            <person name="Kato T."/>
            <person name="Kawaji H."/>
            <person name="Kawagashira N."/>
            <person name="Kawashima T."/>
            <person name="Kojima M."/>
            <person name="Kondo S."/>
            <person name="Konno H."/>
            <person name="Nakano K."/>
            <person name="Ninomiya N."/>
            <person name="Nishio T."/>
            <person name="Okada M."/>
            <person name="Plessy C."/>
            <person name="Shibata K."/>
            <person name="Shiraki T."/>
            <person name="Suzuki S."/>
            <person name="Tagami M."/>
            <person name="Waki K."/>
            <person name="Watahiki A."/>
            <person name="Okamura-Oho Y."/>
            <person name="Suzuki H."/>
            <person name="Kawai J."/>
            <person name="Hayashizaki Y."/>
        </authorList>
    </citation>
    <scope>NUCLEOTIDE SEQUENCE [LARGE SCALE MRNA]</scope>
    <source>
        <strain>C57BL/6J</strain>
        <strain>NOD</strain>
        <tissue>Liver</tissue>
        <tissue>Placenta</tissue>
        <tissue>Thymus</tissue>
    </source>
</reference>
<reference key="3">
    <citation type="journal article" date="2004" name="Genome Res.">
        <title>The status, quality, and expansion of the NIH full-length cDNA project: the Mammalian Gene Collection (MGC).</title>
        <authorList>
            <consortium name="The MGC Project Team"/>
        </authorList>
    </citation>
    <scope>NUCLEOTIDE SEQUENCE [LARGE SCALE MRNA]</scope>
    <source>
        <strain>FVB/N</strain>
        <tissue>Mammary tumor</tissue>
    </source>
</reference>
<reference key="4">
    <citation type="journal article" date="2010" name="Cell">
        <title>A tissue-specific atlas of mouse protein phosphorylation and expression.</title>
        <authorList>
            <person name="Huttlin E.L."/>
            <person name="Jedrychowski M.P."/>
            <person name="Elias J.E."/>
            <person name="Goswami T."/>
            <person name="Rad R."/>
            <person name="Beausoleil S.A."/>
            <person name="Villen J."/>
            <person name="Haas W."/>
            <person name="Sowa M.E."/>
            <person name="Gygi S.P."/>
        </authorList>
    </citation>
    <scope>IDENTIFICATION BY MASS SPECTROMETRY [LARGE SCALE ANALYSIS]</scope>
    <source>
        <tissue>Brain</tissue>
        <tissue>Brown adipose tissue</tissue>
        <tissue>Heart</tissue>
        <tissue>Kidney</tissue>
        <tissue>Liver</tissue>
        <tissue>Lung</tissue>
        <tissue>Pancreas</tissue>
        <tissue>Spleen</tissue>
        <tissue>Testis</tissue>
    </source>
</reference>
<protein>
    <recommendedName>
        <fullName>Alpha-centractin</fullName>
        <shortName>Centractin</shortName>
    </recommendedName>
    <alternativeName>
        <fullName>ARP1</fullName>
    </alternativeName>
    <alternativeName>
        <fullName>Actin-RPV</fullName>
    </alternativeName>
    <alternativeName>
        <fullName>Centrosome-associated actin homolog</fullName>
    </alternativeName>
</protein>
<feature type="chain" id="PRO_0000089059" description="Alpha-centractin">
    <location>
        <begin position="1"/>
        <end position="376"/>
    </location>
</feature>
<feature type="modified residue" description="N-acetylmethionine" evidence="2">
    <location>
        <position position="1"/>
    </location>
</feature>
<keyword id="KW-0007">Acetylation</keyword>
<keyword id="KW-0067">ATP-binding</keyword>
<keyword id="KW-0963">Cytoplasm</keyword>
<keyword id="KW-0206">Cytoskeleton</keyword>
<keyword id="KW-0547">Nucleotide-binding</keyword>
<keyword id="KW-1185">Reference proteome</keyword>
<dbReference type="EMBL" id="AB010297">
    <property type="protein sequence ID" value="BAA24423.1"/>
    <property type="molecule type" value="mRNA"/>
</dbReference>
<dbReference type="EMBL" id="AK010632">
    <property type="protein sequence ID" value="BAB27076.1"/>
    <property type="molecule type" value="mRNA"/>
</dbReference>
<dbReference type="EMBL" id="AK088062">
    <property type="protein sequence ID" value="BAC40124.1"/>
    <property type="molecule type" value="mRNA"/>
</dbReference>
<dbReference type="EMBL" id="AK167450">
    <property type="protein sequence ID" value="BAE39536.1"/>
    <property type="molecule type" value="mRNA"/>
</dbReference>
<dbReference type="EMBL" id="AK168889">
    <property type="protein sequence ID" value="BAE40706.1"/>
    <property type="molecule type" value="mRNA"/>
</dbReference>
<dbReference type="EMBL" id="BC007131">
    <property type="protein sequence ID" value="AAH07131.1"/>
    <property type="molecule type" value="mRNA"/>
</dbReference>
<dbReference type="CCDS" id="CCDS29878.1"/>
<dbReference type="RefSeq" id="NP_058556.1">
    <property type="nucleotide sequence ID" value="NM_016860.2"/>
</dbReference>
<dbReference type="SMR" id="P61164"/>
<dbReference type="BioGRID" id="207569">
    <property type="interactions" value="34"/>
</dbReference>
<dbReference type="FunCoup" id="P61164">
    <property type="interactions" value="2610"/>
</dbReference>
<dbReference type="IntAct" id="P61164">
    <property type="interactions" value="19"/>
</dbReference>
<dbReference type="MINT" id="P61164"/>
<dbReference type="STRING" id="10090.ENSMUSP00000039844"/>
<dbReference type="GlyGen" id="P61164">
    <property type="glycosylation" value="1 site, 1 O-linked glycan (1 site)"/>
</dbReference>
<dbReference type="iPTMnet" id="P61164"/>
<dbReference type="PhosphoSitePlus" id="P61164"/>
<dbReference type="SwissPalm" id="P61164"/>
<dbReference type="REPRODUCTION-2DPAGE" id="P61164"/>
<dbReference type="jPOST" id="P61164"/>
<dbReference type="PaxDb" id="10090-ENSMUSP00000039844"/>
<dbReference type="PeptideAtlas" id="P61164"/>
<dbReference type="ProteomicsDB" id="285723"/>
<dbReference type="Pumba" id="P61164"/>
<dbReference type="Antibodypedia" id="31450">
    <property type="antibodies" value="264 antibodies from 31 providers"/>
</dbReference>
<dbReference type="DNASU" id="54130"/>
<dbReference type="Ensembl" id="ENSMUST00000040270.6">
    <property type="protein sequence ID" value="ENSMUSP00000039844.5"/>
    <property type="gene ID" value="ENSMUSG00000025228.6"/>
</dbReference>
<dbReference type="GeneID" id="54130"/>
<dbReference type="KEGG" id="mmu:54130"/>
<dbReference type="UCSC" id="uc008htm.1">
    <property type="organism name" value="mouse"/>
</dbReference>
<dbReference type="AGR" id="MGI:1858964"/>
<dbReference type="CTD" id="10121"/>
<dbReference type="MGI" id="MGI:1858964">
    <property type="gene designation" value="Actr1a"/>
</dbReference>
<dbReference type="VEuPathDB" id="HostDB:ENSMUSG00000025228"/>
<dbReference type="eggNOG" id="KOG0676">
    <property type="taxonomic scope" value="Eukaryota"/>
</dbReference>
<dbReference type="GeneTree" id="ENSGT00940000155782"/>
<dbReference type="HOGENOM" id="CLU_027965_0_1_1"/>
<dbReference type="InParanoid" id="P61164"/>
<dbReference type="OMA" id="CIHSRFM"/>
<dbReference type="OrthoDB" id="5132116at2759"/>
<dbReference type="PhylomeDB" id="P61164"/>
<dbReference type="TreeFam" id="TF300420"/>
<dbReference type="Reactome" id="R-MMU-2132295">
    <property type="pathway name" value="MHC class II antigen presentation"/>
</dbReference>
<dbReference type="Reactome" id="R-MMU-2565942">
    <property type="pathway name" value="Regulation of PLK1 Activity at G2/M Transition"/>
</dbReference>
<dbReference type="Reactome" id="R-MMU-3371497">
    <property type="pathway name" value="HSP90 chaperone cycle for steroid hormone receptors (SHR) in the presence of ligand"/>
</dbReference>
<dbReference type="Reactome" id="R-MMU-380259">
    <property type="pathway name" value="Loss of Nlp from mitotic centrosomes"/>
</dbReference>
<dbReference type="Reactome" id="R-MMU-380270">
    <property type="pathway name" value="Recruitment of mitotic centrosome proteins and complexes"/>
</dbReference>
<dbReference type="Reactome" id="R-MMU-380284">
    <property type="pathway name" value="Loss of proteins required for interphase microtubule organization from the centrosome"/>
</dbReference>
<dbReference type="Reactome" id="R-MMU-380320">
    <property type="pathway name" value="Recruitment of NuMA to mitotic centrosomes"/>
</dbReference>
<dbReference type="Reactome" id="R-MMU-5620912">
    <property type="pathway name" value="Anchoring of the basal body to the plasma membrane"/>
</dbReference>
<dbReference type="Reactome" id="R-MMU-6807878">
    <property type="pathway name" value="COPI-mediated anterograde transport"/>
</dbReference>
<dbReference type="Reactome" id="R-MMU-6811436">
    <property type="pathway name" value="COPI-independent Golgi-to-ER retrograde traffic"/>
</dbReference>
<dbReference type="Reactome" id="R-MMU-8854518">
    <property type="pathway name" value="AURKA Activation by TPX2"/>
</dbReference>
<dbReference type="BioGRID-ORCS" id="54130">
    <property type="hits" value="3 hits in 78 CRISPR screens"/>
</dbReference>
<dbReference type="CD-CODE" id="CE726F99">
    <property type="entry name" value="Postsynaptic density"/>
</dbReference>
<dbReference type="ChiTaRS" id="Actr1a">
    <property type="organism name" value="mouse"/>
</dbReference>
<dbReference type="PRO" id="PR:P61164"/>
<dbReference type="Proteomes" id="UP000000589">
    <property type="component" value="Chromosome 19"/>
</dbReference>
<dbReference type="RNAct" id="P61164">
    <property type="molecule type" value="protein"/>
</dbReference>
<dbReference type="Bgee" id="ENSMUSG00000025228">
    <property type="expression patterns" value="Expressed in ear vesicle and 263 other cell types or tissues"/>
</dbReference>
<dbReference type="ExpressionAtlas" id="P61164">
    <property type="expression patterns" value="baseline and differential"/>
</dbReference>
<dbReference type="GO" id="GO:0005938">
    <property type="term" value="C:cell cortex"/>
    <property type="evidence" value="ECO:0007669"/>
    <property type="project" value="UniProtKB-SubCell"/>
</dbReference>
<dbReference type="GO" id="GO:0005813">
    <property type="term" value="C:centrosome"/>
    <property type="evidence" value="ECO:0007669"/>
    <property type="project" value="UniProtKB-SubCell"/>
</dbReference>
<dbReference type="GO" id="GO:0043209">
    <property type="term" value="C:myelin sheath"/>
    <property type="evidence" value="ECO:0007005"/>
    <property type="project" value="UniProtKB"/>
</dbReference>
<dbReference type="GO" id="GO:0005524">
    <property type="term" value="F:ATP binding"/>
    <property type="evidence" value="ECO:0007669"/>
    <property type="project" value="UniProtKB-KW"/>
</dbReference>
<dbReference type="CDD" id="cd10216">
    <property type="entry name" value="ASKHA_NBD_Arp1"/>
    <property type="match status" value="1"/>
</dbReference>
<dbReference type="FunFam" id="3.30.420.40:FF:000188">
    <property type="entry name" value="Actin like 6B"/>
    <property type="match status" value="2"/>
</dbReference>
<dbReference type="FunFam" id="3.90.640.10:FF:000008">
    <property type="entry name" value="alpha-centractin isoform X1"/>
    <property type="match status" value="1"/>
</dbReference>
<dbReference type="Gene3D" id="3.30.420.40">
    <property type="match status" value="2"/>
</dbReference>
<dbReference type="Gene3D" id="3.90.640.10">
    <property type="entry name" value="Actin, Chain A, domain 4"/>
    <property type="match status" value="1"/>
</dbReference>
<dbReference type="InterPro" id="IPR004000">
    <property type="entry name" value="Actin"/>
</dbReference>
<dbReference type="InterPro" id="IPR020902">
    <property type="entry name" value="Actin/actin-like_CS"/>
</dbReference>
<dbReference type="InterPro" id="IPR004001">
    <property type="entry name" value="Actin_CS"/>
</dbReference>
<dbReference type="InterPro" id="IPR043129">
    <property type="entry name" value="ATPase_NBD"/>
</dbReference>
<dbReference type="PANTHER" id="PTHR11937">
    <property type="entry name" value="ACTIN"/>
    <property type="match status" value="1"/>
</dbReference>
<dbReference type="Pfam" id="PF00022">
    <property type="entry name" value="Actin"/>
    <property type="match status" value="1"/>
</dbReference>
<dbReference type="PRINTS" id="PR00190">
    <property type="entry name" value="ACTIN"/>
</dbReference>
<dbReference type="SMART" id="SM00268">
    <property type="entry name" value="ACTIN"/>
    <property type="match status" value="1"/>
</dbReference>
<dbReference type="SUPFAM" id="SSF53067">
    <property type="entry name" value="Actin-like ATPase domain"/>
    <property type="match status" value="2"/>
</dbReference>
<dbReference type="PROSITE" id="PS00432">
    <property type="entry name" value="ACTINS_2"/>
    <property type="match status" value="1"/>
</dbReference>
<dbReference type="PROSITE" id="PS01132">
    <property type="entry name" value="ACTINS_ACT_LIKE"/>
    <property type="match status" value="1"/>
</dbReference>
<comment type="function">
    <text evidence="1">Part of the ACTR1A/ACTB filament around which the dynactin complex is built. The dynactin multiprotein complex activates the molecular motor dynein for ultra-processive transport along microtubules.</text>
</comment>
<comment type="subunit">
    <text evidence="1 2">Part of the ACTR1A/ACTB filament around which the dynactin complex is built. The filament contains 8 copies of ACTR1A and 1 ACTB. Interacts with dynein and adapters such as BICD2 (By similarity). Interacts with BCCIP (isoform 2/alpha) (By similarity).</text>
</comment>
<comment type="subcellular location">
    <subcellularLocation>
        <location evidence="3">Cytoplasm</location>
        <location evidence="3">Cytoskeleton</location>
    </subcellularLocation>
    <subcellularLocation>
        <location evidence="2">Cytoplasm</location>
        <location evidence="2">Cytoskeleton</location>
        <location evidence="2">Microtubule organizing center</location>
        <location evidence="2">Centrosome</location>
    </subcellularLocation>
    <subcellularLocation>
        <location evidence="2">Cytoplasm</location>
        <location evidence="2">Cell cortex</location>
    </subcellularLocation>
</comment>
<comment type="similarity">
    <text evidence="4">Belongs to the actin family. ARP1 subfamily.</text>
</comment>
<proteinExistence type="evidence at protein level"/>
<accession>P61164</accession>
<accession>P42024</accession>
<accession>Q3TJF9</accession>
<organism>
    <name type="scientific">Mus musculus</name>
    <name type="common">Mouse</name>
    <dbReference type="NCBI Taxonomy" id="10090"/>
    <lineage>
        <taxon>Eukaryota</taxon>
        <taxon>Metazoa</taxon>
        <taxon>Chordata</taxon>
        <taxon>Craniata</taxon>
        <taxon>Vertebrata</taxon>
        <taxon>Euteleostomi</taxon>
        <taxon>Mammalia</taxon>
        <taxon>Eutheria</taxon>
        <taxon>Euarchontoglires</taxon>
        <taxon>Glires</taxon>
        <taxon>Rodentia</taxon>
        <taxon>Myomorpha</taxon>
        <taxon>Muroidea</taxon>
        <taxon>Muridae</taxon>
        <taxon>Murinae</taxon>
        <taxon>Mus</taxon>
        <taxon>Mus</taxon>
    </lineage>
</organism>